<evidence type="ECO:0000250" key="1"/>
<evidence type="ECO:0000255" key="2"/>
<evidence type="ECO:0000256" key="3">
    <source>
        <dbReference type="SAM" id="MobiDB-lite"/>
    </source>
</evidence>
<evidence type="ECO:0000305" key="4"/>
<feature type="signal peptide" evidence="2">
    <location>
        <begin position="1"/>
        <end position="15"/>
    </location>
</feature>
<feature type="chain" id="PRO_0000002398" description="Aspartyl protease inhibitor">
    <location>
        <begin position="16"/>
        <end position="227"/>
    </location>
</feature>
<feature type="region of interest" description="Disordered" evidence="3">
    <location>
        <begin position="88"/>
        <end position="116"/>
    </location>
</feature>
<feature type="compositionally biased region" description="Basic and acidic residues" evidence="3">
    <location>
        <begin position="88"/>
        <end position="109"/>
    </location>
</feature>
<feature type="disulfide bond" evidence="1">
    <location>
        <begin position="131"/>
        <end position="223"/>
    </location>
</feature>
<protein>
    <recommendedName>
        <fullName>Aspartyl protease inhibitor</fullName>
    </recommendedName>
</protein>
<gene>
    <name type="primary">API</name>
</gene>
<dbReference type="EMBL" id="AJ418047">
    <property type="protein sequence ID" value="CAD10783.1"/>
    <property type="molecule type" value="mRNA"/>
</dbReference>
<dbReference type="SMR" id="Q95PP1"/>
<dbReference type="MEROPS" id="I33.002"/>
<dbReference type="GO" id="GO:0005576">
    <property type="term" value="C:extracellular region"/>
    <property type="evidence" value="ECO:0007669"/>
    <property type="project" value="UniProtKB-SubCell"/>
</dbReference>
<dbReference type="GO" id="GO:0019828">
    <property type="term" value="F:aspartic-type endopeptidase inhibitor activity"/>
    <property type="evidence" value="ECO:0007669"/>
    <property type="project" value="UniProtKB-KW"/>
</dbReference>
<dbReference type="CDD" id="cd00225">
    <property type="entry name" value="API3"/>
    <property type="match status" value="1"/>
</dbReference>
<dbReference type="Gene3D" id="3.30.1120.50">
    <property type="entry name" value="Pepsin inhibitor-3"/>
    <property type="match status" value="2"/>
</dbReference>
<dbReference type="InterPro" id="IPR010480">
    <property type="entry name" value="Pepsin-I3"/>
</dbReference>
<dbReference type="InterPro" id="IPR038412">
    <property type="entry name" value="Pepsin-I3_sf"/>
</dbReference>
<dbReference type="InterPro" id="IPR051901">
    <property type="entry name" value="Protease_Inhibitor_I33"/>
</dbReference>
<dbReference type="PANTHER" id="PTHR37969">
    <property type="entry name" value="PROTEIN CBG07421-RELATED"/>
    <property type="match status" value="1"/>
</dbReference>
<dbReference type="PANTHER" id="PTHR37969:SF1">
    <property type="entry name" value="PROTEIN CBG13105"/>
    <property type="match status" value="1"/>
</dbReference>
<dbReference type="Pfam" id="PF06394">
    <property type="entry name" value="Pepsin-I3"/>
    <property type="match status" value="2"/>
</dbReference>
<dbReference type="SUPFAM" id="SSF55149">
    <property type="entry name" value="Pepsin inhibitor-3"/>
    <property type="match status" value="1"/>
</dbReference>
<name>API_OSTOS</name>
<accession>Q95PP1</accession>
<reference key="1">
    <citation type="submission" date="2001-10" db="EMBL/GenBank/DDBJ databases">
        <title>Identification of aspartyl protease inhibitor of Ostertagia ostertagi.</title>
        <authorList>
            <person name="De Maere V."/>
            <person name="Vercauteren I."/>
            <person name="Claerebout E."/>
            <person name="Vercruysse J."/>
        </authorList>
    </citation>
    <scope>NUCLEOTIDE SEQUENCE [MRNA]</scope>
</reference>
<sequence length="227" mass="24958">MKLVVLCVLCGIALAAPRQKRLTVGTIAVTGGVGGSTGCVVTGNVLYANGFRLRELNPSEQQELVNYEKQVADYKAAVKQALKERQESLKSRMAGKKEKAVTPKEEDLPKAPQKPSFCTEDDTTQFYFDGCMVQGNKVYVGNTFARDLDQNEIQELKEFEKKQTVYQEYVQKQIQAQVSNLFGGADFFSSFFNGGSEKGSSTTTVAPVLPEDAPEQPAGPNFCTRIY</sequence>
<organism>
    <name type="scientific">Ostertagia ostertagi</name>
    <name type="common">Brown stomach worm</name>
    <name type="synonym">Strongylus ostertagi</name>
    <dbReference type="NCBI Taxonomy" id="6317"/>
    <lineage>
        <taxon>Eukaryota</taxon>
        <taxon>Metazoa</taxon>
        <taxon>Ecdysozoa</taxon>
        <taxon>Nematoda</taxon>
        <taxon>Chromadorea</taxon>
        <taxon>Rhabditida</taxon>
        <taxon>Rhabditina</taxon>
        <taxon>Rhabditomorpha</taxon>
        <taxon>Strongyloidea</taxon>
        <taxon>Trichostrongylidae</taxon>
        <taxon>Ostertagia</taxon>
    </lineage>
</organism>
<keyword id="KW-0062">Aspartic protease inhibitor</keyword>
<keyword id="KW-1015">Disulfide bond</keyword>
<keyword id="KW-0646">Protease inhibitor</keyword>
<keyword id="KW-0964">Secreted</keyword>
<keyword id="KW-0732">Signal</keyword>
<comment type="function">
    <text>Aspartyl protease inhibitor.</text>
</comment>
<comment type="subcellular location">
    <subcellularLocation>
        <location evidence="4">Secreted</location>
    </subcellularLocation>
</comment>
<comment type="similarity">
    <text evidence="4">Belongs to the protease inhibitor I33 family.</text>
</comment>
<proteinExistence type="evidence at transcript level"/>